<accession>Q8KBZ5</accession>
<protein>
    <recommendedName>
        <fullName evidence="1">Tyrosine recombinase XerC</fullName>
    </recommendedName>
</protein>
<comment type="function">
    <text evidence="1">Site-specific tyrosine recombinase, which acts by catalyzing the cutting and rejoining of the recombining DNA molecules. The XerC-XerD complex is essential to convert dimers of the bacterial chromosome into monomers to permit their segregation at cell division. It also contributes to the segregational stability of plasmids.</text>
</comment>
<comment type="subunit">
    <text evidence="1">Forms a cyclic heterotetrameric complex composed of two molecules of XerC and two molecules of XerD.</text>
</comment>
<comment type="subcellular location">
    <subcellularLocation>
        <location evidence="1">Cytoplasm</location>
    </subcellularLocation>
</comment>
<comment type="similarity">
    <text evidence="1">Belongs to the 'phage' integrase family. XerC subfamily.</text>
</comment>
<name>XERC_CHLTE</name>
<proteinExistence type="inferred from homology"/>
<gene>
    <name evidence="1" type="primary">xerC</name>
    <name type="ordered locus">CT1635</name>
</gene>
<reference key="1">
    <citation type="journal article" date="2002" name="Proc. Natl. Acad. Sci. U.S.A.">
        <title>The complete genome sequence of Chlorobium tepidum TLS, a photosynthetic, anaerobic, green-sulfur bacterium.</title>
        <authorList>
            <person name="Eisen J.A."/>
            <person name="Nelson K.E."/>
            <person name="Paulsen I.T."/>
            <person name="Heidelberg J.F."/>
            <person name="Wu M."/>
            <person name="Dodson R.J."/>
            <person name="DeBoy R.T."/>
            <person name="Gwinn M.L."/>
            <person name="Nelson W.C."/>
            <person name="Haft D.H."/>
            <person name="Hickey E.K."/>
            <person name="Peterson J.D."/>
            <person name="Durkin A.S."/>
            <person name="Kolonay J.F."/>
            <person name="Yang F."/>
            <person name="Holt I.E."/>
            <person name="Umayam L.A."/>
            <person name="Mason T.M."/>
            <person name="Brenner M."/>
            <person name="Shea T.P."/>
            <person name="Parksey D.S."/>
            <person name="Nierman W.C."/>
            <person name="Feldblyum T.V."/>
            <person name="Hansen C.L."/>
            <person name="Craven M.B."/>
            <person name="Radune D."/>
            <person name="Vamathevan J.J."/>
            <person name="Khouri H.M."/>
            <person name="White O."/>
            <person name="Gruber T.M."/>
            <person name="Ketchum K.A."/>
            <person name="Venter J.C."/>
            <person name="Tettelin H."/>
            <person name="Bryant D.A."/>
            <person name="Fraser C.M."/>
        </authorList>
    </citation>
    <scope>NUCLEOTIDE SEQUENCE [LARGE SCALE GENOMIC DNA]</scope>
    <source>
        <strain>ATCC 49652 / DSM 12025 / NBRC 103806 / TLS</strain>
    </source>
</reference>
<organism>
    <name type="scientific">Chlorobaculum tepidum (strain ATCC 49652 / DSM 12025 / NBRC 103806 / TLS)</name>
    <name type="common">Chlorobium tepidum</name>
    <dbReference type="NCBI Taxonomy" id="194439"/>
    <lineage>
        <taxon>Bacteria</taxon>
        <taxon>Pseudomonadati</taxon>
        <taxon>Chlorobiota</taxon>
        <taxon>Chlorobiia</taxon>
        <taxon>Chlorobiales</taxon>
        <taxon>Chlorobiaceae</taxon>
        <taxon>Chlorobaculum</taxon>
    </lineage>
</organism>
<keyword id="KW-0131">Cell cycle</keyword>
<keyword id="KW-0132">Cell division</keyword>
<keyword id="KW-0159">Chromosome partition</keyword>
<keyword id="KW-0963">Cytoplasm</keyword>
<keyword id="KW-0229">DNA integration</keyword>
<keyword id="KW-0233">DNA recombination</keyword>
<keyword id="KW-0238">DNA-binding</keyword>
<keyword id="KW-1185">Reference proteome</keyword>
<sequence>MKRSAPVQFAKKDVANCRWLGEFLVHLESTRNVSAKTVTAYTTDLIQFFEFLTDESGHQEMSAVDPELVEVADVRRFMGDLLDSGIKPRSIARKLASVKSFYRFLLDTGKIERSPLSLVLTPRLERKIPDFLSEEEASRLFDQLVLSDQESVGPEQGQKAAVQRFELARDRAVLELLYGCGLRLSEVTGLENADVDLVHGFLKVTGKGRKQRIVPFGEPAAEALRNYFEVRRNFFRILKEGAGETSKVFVTAKGRQIYPMLVQRMTKRYLSPVTESARKNPHMLRHTFATHMLNGGADLKSVSEMLGHSNLTTTELYTHVTFNRLRDAYTKAHPRA</sequence>
<feature type="chain" id="PRO_0000095290" description="Tyrosine recombinase XerC">
    <location>
        <begin position="1"/>
        <end position="336"/>
    </location>
</feature>
<feature type="domain" description="Core-binding (CB)" evidence="3">
    <location>
        <begin position="14"/>
        <end position="106"/>
    </location>
</feature>
<feature type="domain" description="Tyr recombinase" evidence="2">
    <location>
        <begin position="127"/>
        <end position="330"/>
    </location>
</feature>
<feature type="active site" evidence="1">
    <location>
        <position position="183"/>
    </location>
</feature>
<feature type="active site" evidence="1">
    <location>
        <position position="207"/>
    </location>
</feature>
<feature type="active site" evidence="1">
    <location>
        <position position="282"/>
    </location>
</feature>
<feature type="active site" evidence="1">
    <location>
        <position position="285"/>
    </location>
</feature>
<feature type="active site" evidence="1">
    <location>
        <position position="308"/>
    </location>
</feature>
<feature type="active site" description="O-(3'-phospho-DNA)-tyrosine intermediate" evidence="1">
    <location>
        <position position="317"/>
    </location>
</feature>
<dbReference type="EMBL" id="AE006470">
    <property type="protein sequence ID" value="AAM72860.1"/>
    <property type="molecule type" value="Genomic_DNA"/>
</dbReference>
<dbReference type="RefSeq" id="NP_662518.1">
    <property type="nucleotide sequence ID" value="NC_002932.3"/>
</dbReference>
<dbReference type="RefSeq" id="WP_010933299.1">
    <property type="nucleotide sequence ID" value="NC_002932.3"/>
</dbReference>
<dbReference type="SMR" id="Q8KBZ5"/>
<dbReference type="STRING" id="194439.CT1635"/>
<dbReference type="EnsemblBacteria" id="AAM72860">
    <property type="protein sequence ID" value="AAM72860"/>
    <property type="gene ID" value="CT1635"/>
</dbReference>
<dbReference type="KEGG" id="cte:CT1635"/>
<dbReference type="PATRIC" id="fig|194439.7.peg.1478"/>
<dbReference type="eggNOG" id="COG4974">
    <property type="taxonomic scope" value="Bacteria"/>
</dbReference>
<dbReference type="HOGENOM" id="CLU_027562_9_0_10"/>
<dbReference type="OrthoDB" id="9801717at2"/>
<dbReference type="Proteomes" id="UP000001007">
    <property type="component" value="Chromosome"/>
</dbReference>
<dbReference type="GO" id="GO:0005737">
    <property type="term" value="C:cytoplasm"/>
    <property type="evidence" value="ECO:0007669"/>
    <property type="project" value="UniProtKB-SubCell"/>
</dbReference>
<dbReference type="GO" id="GO:0003677">
    <property type="term" value="F:DNA binding"/>
    <property type="evidence" value="ECO:0007669"/>
    <property type="project" value="UniProtKB-KW"/>
</dbReference>
<dbReference type="GO" id="GO:0009037">
    <property type="term" value="F:tyrosine-based site-specific recombinase activity"/>
    <property type="evidence" value="ECO:0007669"/>
    <property type="project" value="UniProtKB-UniRule"/>
</dbReference>
<dbReference type="GO" id="GO:0051301">
    <property type="term" value="P:cell division"/>
    <property type="evidence" value="ECO:0007669"/>
    <property type="project" value="UniProtKB-KW"/>
</dbReference>
<dbReference type="GO" id="GO:0007059">
    <property type="term" value="P:chromosome segregation"/>
    <property type="evidence" value="ECO:0007669"/>
    <property type="project" value="UniProtKB-UniRule"/>
</dbReference>
<dbReference type="GO" id="GO:0006313">
    <property type="term" value="P:DNA transposition"/>
    <property type="evidence" value="ECO:0007669"/>
    <property type="project" value="UniProtKB-UniRule"/>
</dbReference>
<dbReference type="CDD" id="cd00798">
    <property type="entry name" value="INT_XerDC_C"/>
    <property type="match status" value="1"/>
</dbReference>
<dbReference type="Gene3D" id="1.10.150.130">
    <property type="match status" value="1"/>
</dbReference>
<dbReference type="Gene3D" id="1.10.443.10">
    <property type="entry name" value="Intergrase catalytic core"/>
    <property type="match status" value="1"/>
</dbReference>
<dbReference type="HAMAP" id="MF_01808">
    <property type="entry name" value="Recomb_XerC_XerD"/>
    <property type="match status" value="1"/>
</dbReference>
<dbReference type="InterPro" id="IPR044068">
    <property type="entry name" value="CB"/>
</dbReference>
<dbReference type="InterPro" id="IPR011010">
    <property type="entry name" value="DNA_brk_join_enz"/>
</dbReference>
<dbReference type="InterPro" id="IPR013762">
    <property type="entry name" value="Integrase-like_cat_sf"/>
</dbReference>
<dbReference type="InterPro" id="IPR002104">
    <property type="entry name" value="Integrase_catalytic"/>
</dbReference>
<dbReference type="InterPro" id="IPR010998">
    <property type="entry name" value="Integrase_recombinase_N"/>
</dbReference>
<dbReference type="InterPro" id="IPR004107">
    <property type="entry name" value="Integrase_SAM-like_N"/>
</dbReference>
<dbReference type="InterPro" id="IPR023009">
    <property type="entry name" value="Tyrosine_recombinase_XerC/XerD"/>
</dbReference>
<dbReference type="InterPro" id="IPR050090">
    <property type="entry name" value="Tyrosine_recombinase_XerCD"/>
</dbReference>
<dbReference type="PANTHER" id="PTHR30349">
    <property type="entry name" value="PHAGE INTEGRASE-RELATED"/>
    <property type="match status" value="1"/>
</dbReference>
<dbReference type="PANTHER" id="PTHR30349:SF77">
    <property type="entry name" value="TYROSINE RECOMBINASE XERC"/>
    <property type="match status" value="1"/>
</dbReference>
<dbReference type="Pfam" id="PF02899">
    <property type="entry name" value="Phage_int_SAM_1"/>
    <property type="match status" value="1"/>
</dbReference>
<dbReference type="Pfam" id="PF00589">
    <property type="entry name" value="Phage_integrase"/>
    <property type="match status" value="1"/>
</dbReference>
<dbReference type="SUPFAM" id="SSF56349">
    <property type="entry name" value="DNA breaking-rejoining enzymes"/>
    <property type="match status" value="1"/>
</dbReference>
<dbReference type="PROSITE" id="PS51900">
    <property type="entry name" value="CB"/>
    <property type="match status" value="1"/>
</dbReference>
<dbReference type="PROSITE" id="PS51898">
    <property type="entry name" value="TYR_RECOMBINASE"/>
    <property type="match status" value="1"/>
</dbReference>
<evidence type="ECO:0000255" key="1">
    <source>
        <dbReference type="HAMAP-Rule" id="MF_01808"/>
    </source>
</evidence>
<evidence type="ECO:0000255" key="2">
    <source>
        <dbReference type="PROSITE-ProRule" id="PRU01246"/>
    </source>
</evidence>
<evidence type="ECO:0000255" key="3">
    <source>
        <dbReference type="PROSITE-ProRule" id="PRU01248"/>
    </source>
</evidence>